<sequence length="511" mass="55516">MKKRALVSVSDKTGVVEFVKGLLEQGIEVISTGGTKKLLEENGLQVIGISEVTGFPEIMDGRVKTLHPNIHGGLLAVRDNETHVAQMNELGMEPIDFVVVNLYPFKETIAKPDVTFADAIENIDIGGPTMIRSAAKNHKFVSVIVDPVDYDVVLAELKENGEVAEETKRKLAAKVFRHTAAYDALISNYLTEQMGEESPETLTVTFEKKQDLRYGENPHQKATFYKAPFAATSSVAYAEQLHGKELSYNNINDADAALSIVKEFTEPAVVAVKHMNPCGVGVGTDIHEAYTRAYEADPVSIFGGIIAANREIDKATAEKLHEIFLEIIIAPSFSKEALEVLQSKKNLRLLTVNIEKATSASKKLTSVQGGLLVQEEDTLSLDESTISIPTKREPSEQEWKDLKLAWKVVKHVKSNAIVLAKDDMTIGVGAGQMNRVGSAKIAITQAGEKAQGSALASDAFFPMPDTVEEAAKAGITAIIQPGGSIRDEDSIKVADTYGIAMVFTGVRHFKH</sequence>
<keyword id="KW-0378">Hydrolase</keyword>
<keyword id="KW-0511">Multifunctional enzyme</keyword>
<keyword id="KW-0658">Purine biosynthesis</keyword>
<keyword id="KW-0808">Transferase</keyword>
<evidence type="ECO:0000255" key="1">
    <source>
        <dbReference type="HAMAP-Rule" id="MF_00139"/>
    </source>
</evidence>
<evidence type="ECO:0000255" key="2">
    <source>
        <dbReference type="PROSITE-ProRule" id="PRU01202"/>
    </source>
</evidence>
<reference key="1">
    <citation type="submission" date="2009-04" db="EMBL/GenBank/DDBJ databases">
        <title>Genome sequence of Bacillus anthracis A0248.</title>
        <authorList>
            <person name="Dodson R.J."/>
            <person name="Munk A.C."/>
            <person name="Bruce D."/>
            <person name="Detter C."/>
            <person name="Tapia R."/>
            <person name="Sutton G."/>
            <person name="Sims D."/>
            <person name="Brettin T."/>
        </authorList>
    </citation>
    <scope>NUCLEOTIDE SEQUENCE [LARGE SCALE GENOMIC DNA]</scope>
    <source>
        <strain>A0248</strain>
    </source>
</reference>
<feature type="chain" id="PRO_1000122944" description="Bifunctional purine biosynthesis protein PurH">
    <location>
        <begin position="1"/>
        <end position="511"/>
    </location>
</feature>
<feature type="domain" description="MGS-like" evidence="2">
    <location>
        <begin position="1"/>
        <end position="145"/>
    </location>
</feature>
<organism>
    <name type="scientific">Bacillus anthracis (strain A0248)</name>
    <dbReference type="NCBI Taxonomy" id="592021"/>
    <lineage>
        <taxon>Bacteria</taxon>
        <taxon>Bacillati</taxon>
        <taxon>Bacillota</taxon>
        <taxon>Bacilli</taxon>
        <taxon>Bacillales</taxon>
        <taxon>Bacillaceae</taxon>
        <taxon>Bacillus</taxon>
        <taxon>Bacillus cereus group</taxon>
    </lineage>
</organism>
<accession>C3PBN4</accession>
<name>PUR9_BACAA</name>
<comment type="catalytic activity">
    <reaction evidence="1">
        <text>(6R)-10-formyltetrahydrofolate + 5-amino-1-(5-phospho-beta-D-ribosyl)imidazole-4-carboxamide = 5-formamido-1-(5-phospho-D-ribosyl)imidazole-4-carboxamide + (6S)-5,6,7,8-tetrahydrofolate</text>
        <dbReference type="Rhea" id="RHEA:22192"/>
        <dbReference type="ChEBI" id="CHEBI:57453"/>
        <dbReference type="ChEBI" id="CHEBI:58467"/>
        <dbReference type="ChEBI" id="CHEBI:58475"/>
        <dbReference type="ChEBI" id="CHEBI:195366"/>
        <dbReference type="EC" id="2.1.2.3"/>
    </reaction>
</comment>
<comment type="catalytic activity">
    <reaction evidence="1">
        <text>IMP + H2O = 5-formamido-1-(5-phospho-D-ribosyl)imidazole-4-carboxamide</text>
        <dbReference type="Rhea" id="RHEA:18445"/>
        <dbReference type="ChEBI" id="CHEBI:15377"/>
        <dbReference type="ChEBI" id="CHEBI:58053"/>
        <dbReference type="ChEBI" id="CHEBI:58467"/>
        <dbReference type="EC" id="3.5.4.10"/>
    </reaction>
</comment>
<comment type="pathway">
    <text evidence="1">Purine metabolism; IMP biosynthesis via de novo pathway; 5-formamido-1-(5-phospho-D-ribosyl)imidazole-4-carboxamide from 5-amino-1-(5-phospho-D-ribosyl)imidazole-4-carboxamide (10-formyl THF route): step 1/1.</text>
</comment>
<comment type="pathway">
    <text evidence="1">Purine metabolism; IMP biosynthesis via de novo pathway; IMP from 5-formamido-1-(5-phospho-D-ribosyl)imidazole-4-carboxamide: step 1/1.</text>
</comment>
<comment type="domain">
    <text evidence="1">The IMP cyclohydrolase activity resides in the N-terminal region.</text>
</comment>
<comment type="similarity">
    <text evidence="1">Belongs to the PurH family.</text>
</comment>
<dbReference type="EC" id="2.1.2.3" evidence="1"/>
<dbReference type="EC" id="3.5.4.10" evidence="1"/>
<dbReference type="EMBL" id="CP001598">
    <property type="protein sequence ID" value="ACQ49609.1"/>
    <property type="molecule type" value="Genomic_DNA"/>
</dbReference>
<dbReference type="RefSeq" id="WP_000745427.1">
    <property type="nucleotide sequence ID" value="NC_012659.1"/>
</dbReference>
<dbReference type="SMR" id="C3PBN4"/>
<dbReference type="GeneID" id="45020357"/>
<dbReference type="KEGG" id="bai:BAA_0353"/>
<dbReference type="HOGENOM" id="CLU_016316_5_2_9"/>
<dbReference type="UniPathway" id="UPA00074">
    <property type="reaction ID" value="UER00133"/>
</dbReference>
<dbReference type="UniPathway" id="UPA00074">
    <property type="reaction ID" value="UER00135"/>
</dbReference>
<dbReference type="GO" id="GO:0005829">
    <property type="term" value="C:cytosol"/>
    <property type="evidence" value="ECO:0007669"/>
    <property type="project" value="TreeGrafter"/>
</dbReference>
<dbReference type="GO" id="GO:0003937">
    <property type="term" value="F:IMP cyclohydrolase activity"/>
    <property type="evidence" value="ECO:0007669"/>
    <property type="project" value="UniProtKB-UniRule"/>
</dbReference>
<dbReference type="GO" id="GO:0004643">
    <property type="term" value="F:phosphoribosylaminoimidazolecarboxamide formyltransferase activity"/>
    <property type="evidence" value="ECO:0007669"/>
    <property type="project" value="UniProtKB-UniRule"/>
</dbReference>
<dbReference type="GO" id="GO:0006189">
    <property type="term" value="P:'de novo' IMP biosynthetic process"/>
    <property type="evidence" value="ECO:0007669"/>
    <property type="project" value="UniProtKB-UniRule"/>
</dbReference>
<dbReference type="CDD" id="cd01421">
    <property type="entry name" value="IMPCH"/>
    <property type="match status" value="1"/>
</dbReference>
<dbReference type="FunFam" id="3.40.140.20:FF:000001">
    <property type="entry name" value="Bifunctional purine biosynthesis protein PurH"/>
    <property type="match status" value="1"/>
</dbReference>
<dbReference type="FunFam" id="3.40.140.20:FF:000002">
    <property type="entry name" value="Bifunctional purine biosynthesis protein PurH"/>
    <property type="match status" value="1"/>
</dbReference>
<dbReference type="FunFam" id="3.40.50.1380:FF:000001">
    <property type="entry name" value="Bifunctional purine biosynthesis protein PurH"/>
    <property type="match status" value="1"/>
</dbReference>
<dbReference type="Gene3D" id="3.40.140.20">
    <property type="match status" value="2"/>
</dbReference>
<dbReference type="Gene3D" id="3.40.50.1380">
    <property type="entry name" value="Methylglyoxal synthase-like domain"/>
    <property type="match status" value="1"/>
</dbReference>
<dbReference type="HAMAP" id="MF_00139">
    <property type="entry name" value="PurH"/>
    <property type="match status" value="1"/>
</dbReference>
<dbReference type="InterPro" id="IPR024051">
    <property type="entry name" value="AICAR_Tfase_dup_dom_sf"/>
</dbReference>
<dbReference type="InterPro" id="IPR016193">
    <property type="entry name" value="Cytidine_deaminase-like"/>
</dbReference>
<dbReference type="InterPro" id="IPR011607">
    <property type="entry name" value="MGS-like_dom"/>
</dbReference>
<dbReference type="InterPro" id="IPR036914">
    <property type="entry name" value="MGS-like_dom_sf"/>
</dbReference>
<dbReference type="InterPro" id="IPR002695">
    <property type="entry name" value="PurH-like"/>
</dbReference>
<dbReference type="NCBIfam" id="NF002049">
    <property type="entry name" value="PRK00881.1"/>
    <property type="match status" value="1"/>
</dbReference>
<dbReference type="NCBIfam" id="TIGR00355">
    <property type="entry name" value="purH"/>
    <property type="match status" value="1"/>
</dbReference>
<dbReference type="PANTHER" id="PTHR11692:SF0">
    <property type="entry name" value="BIFUNCTIONAL PURINE BIOSYNTHESIS PROTEIN ATIC"/>
    <property type="match status" value="1"/>
</dbReference>
<dbReference type="PANTHER" id="PTHR11692">
    <property type="entry name" value="BIFUNCTIONAL PURINE BIOSYNTHESIS PROTEIN PURH"/>
    <property type="match status" value="1"/>
</dbReference>
<dbReference type="Pfam" id="PF01808">
    <property type="entry name" value="AICARFT_IMPCHas"/>
    <property type="match status" value="1"/>
</dbReference>
<dbReference type="Pfam" id="PF02142">
    <property type="entry name" value="MGS"/>
    <property type="match status" value="1"/>
</dbReference>
<dbReference type="PIRSF" id="PIRSF000414">
    <property type="entry name" value="AICARFT_IMPCHas"/>
    <property type="match status" value="1"/>
</dbReference>
<dbReference type="SMART" id="SM00798">
    <property type="entry name" value="AICARFT_IMPCHas"/>
    <property type="match status" value="1"/>
</dbReference>
<dbReference type="SMART" id="SM00851">
    <property type="entry name" value="MGS"/>
    <property type="match status" value="1"/>
</dbReference>
<dbReference type="SUPFAM" id="SSF53927">
    <property type="entry name" value="Cytidine deaminase-like"/>
    <property type="match status" value="1"/>
</dbReference>
<dbReference type="SUPFAM" id="SSF52335">
    <property type="entry name" value="Methylglyoxal synthase-like"/>
    <property type="match status" value="1"/>
</dbReference>
<dbReference type="PROSITE" id="PS51855">
    <property type="entry name" value="MGS"/>
    <property type="match status" value="1"/>
</dbReference>
<proteinExistence type="inferred from homology"/>
<gene>
    <name evidence="1" type="primary">purH</name>
    <name type="ordered locus">BAA_0353</name>
</gene>
<protein>
    <recommendedName>
        <fullName evidence="1">Bifunctional purine biosynthesis protein PurH</fullName>
    </recommendedName>
    <domain>
        <recommendedName>
            <fullName evidence="1">Phosphoribosylaminoimidazolecarboxamide formyltransferase</fullName>
            <ecNumber evidence="1">2.1.2.3</ecNumber>
        </recommendedName>
        <alternativeName>
            <fullName evidence="1">AICAR transformylase</fullName>
        </alternativeName>
    </domain>
    <domain>
        <recommendedName>
            <fullName evidence="1">IMP cyclohydrolase</fullName>
            <ecNumber evidence="1">3.5.4.10</ecNumber>
        </recommendedName>
        <alternativeName>
            <fullName evidence="1">ATIC</fullName>
        </alternativeName>
        <alternativeName>
            <fullName evidence="1">IMP synthase</fullName>
        </alternativeName>
        <alternativeName>
            <fullName evidence="1">Inosinicase</fullName>
        </alternativeName>
    </domain>
</protein>